<organism>
    <name type="scientific">Oryza sativa subsp. japonica</name>
    <name type="common">Rice</name>
    <dbReference type="NCBI Taxonomy" id="39947"/>
    <lineage>
        <taxon>Eukaryota</taxon>
        <taxon>Viridiplantae</taxon>
        <taxon>Streptophyta</taxon>
        <taxon>Embryophyta</taxon>
        <taxon>Tracheophyta</taxon>
        <taxon>Spermatophyta</taxon>
        <taxon>Magnoliopsida</taxon>
        <taxon>Liliopsida</taxon>
        <taxon>Poales</taxon>
        <taxon>Poaceae</taxon>
        <taxon>BOP clade</taxon>
        <taxon>Oryzoideae</taxon>
        <taxon>Oryzeae</taxon>
        <taxon>Oryzinae</taxon>
        <taxon>Oryza</taxon>
        <taxon>Oryza sativa</taxon>
    </lineage>
</organism>
<gene>
    <name type="primary">SPL11</name>
    <name type="ordered locus">Os12g0570000</name>
    <name type="ordered locus">LOC_Os12g38210</name>
</gene>
<comment type="function">
    <text evidence="2 3">E3 ubiquitin-protein ligase that negatively regulates programmed cell death and disease resistance. Participates in flowering time control by mediating ubiquitination and subsequent proteasomal degradation of SPIN1.</text>
</comment>
<comment type="catalytic activity">
    <reaction>
        <text>S-ubiquitinyl-[E2 ubiquitin-conjugating enzyme]-L-cysteine + [acceptor protein]-L-lysine = [E2 ubiquitin-conjugating enzyme]-L-cysteine + N(6)-ubiquitinyl-[acceptor protein]-L-lysine.</text>
        <dbReference type="EC" id="2.3.2.27"/>
    </reaction>
</comment>
<comment type="pathway">
    <text>Protein modification; protein ubiquitination.</text>
</comment>
<comment type="subunit">
    <text evidence="3">Interacts with SPIN1 (via N-terminus).</text>
</comment>
<comment type="subcellular location">
    <subcellularLocation>
        <location evidence="3">Nucleus</location>
    </subcellularLocation>
    <subcellularLocation>
        <location evidence="3">Cytoplasm</location>
    </subcellularLocation>
</comment>
<comment type="tissue specificity">
    <text evidence="2">Highly expressed in leaf, at intermediate levels in shoot and weakly in root.</text>
</comment>
<comment type="induction">
    <text>In both incompatible and compatible interactions with rice blast fungus (M.grisea).</text>
</comment>
<comment type="disruption phenotype">
    <text evidence="2">Lesion mimic (spontaneous cell death) phenotype. Expression of defense-related genes and enhanced non-race-specific resistance to rice blast fungus (M.oryzea) and to bacterial blight (X.oryzae pv oryzae). Delay in flowering time under long day (LD) conditions.</text>
</comment>
<comment type="sequence caution" evidence="4">
    <conflict type="erroneous gene model prediction">
        <sequence resource="EMBL-CDS" id="ABA99652"/>
    </conflict>
</comment>
<comment type="sequence caution" evidence="4">
    <conflict type="erroneous gene model prediction">
        <sequence resource="EMBL-CDS" id="BAF30096"/>
    </conflict>
</comment>
<dbReference type="EC" id="2.3.2.27"/>
<dbReference type="EMBL" id="AY652589">
    <property type="protein sequence ID" value="AAT94160.1"/>
    <property type="molecule type" value="mRNA"/>
</dbReference>
<dbReference type="EMBL" id="AY652590">
    <property type="protein sequence ID" value="AAT94161.1"/>
    <property type="molecule type" value="Genomic_DNA"/>
</dbReference>
<dbReference type="EMBL" id="DP000011">
    <property type="protein sequence ID" value="ABA99652.1"/>
    <property type="status" value="ALT_SEQ"/>
    <property type="molecule type" value="Genomic_DNA"/>
</dbReference>
<dbReference type="EMBL" id="AP008218">
    <property type="protein sequence ID" value="BAF30096.2"/>
    <property type="status" value="ALT_SEQ"/>
    <property type="molecule type" value="Genomic_DNA"/>
</dbReference>
<dbReference type="EMBL" id="AP014968">
    <property type="status" value="NOT_ANNOTATED_CDS"/>
    <property type="molecule type" value="Genomic_DNA"/>
</dbReference>
<dbReference type="EMBL" id="AK105835">
    <property type="status" value="NOT_ANNOTATED_CDS"/>
    <property type="molecule type" value="mRNA"/>
</dbReference>
<dbReference type="SMR" id="Q0IMG9"/>
<dbReference type="FunCoup" id="Q0IMG9">
    <property type="interactions" value="1"/>
</dbReference>
<dbReference type="STRING" id="39947.Q0IMG9"/>
<dbReference type="PaxDb" id="39947-Q0IMG9"/>
<dbReference type="KEGG" id="dosa:Os12g0570000"/>
<dbReference type="eggNOG" id="KOG0167">
    <property type="taxonomic scope" value="Eukaryota"/>
</dbReference>
<dbReference type="HOGENOM" id="CLU_006348_0_0_1"/>
<dbReference type="InParanoid" id="Q0IMG9"/>
<dbReference type="PlantReactome" id="R-OSA-9611432">
    <property type="pathway name" value="Recognition of fungal and bacterial pathogens and immunity response"/>
</dbReference>
<dbReference type="UniPathway" id="UPA00143"/>
<dbReference type="Proteomes" id="UP000000763">
    <property type="component" value="Chromosome 12"/>
</dbReference>
<dbReference type="Proteomes" id="UP000059680">
    <property type="component" value="Chromosome 12"/>
</dbReference>
<dbReference type="GO" id="GO:0005737">
    <property type="term" value="C:cytoplasm"/>
    <property type="evidence" value="ECO:0000318"/>
    <property type="project" value="GO_Central"/>
</dbReference>
<dbReference type="GO" id="GO:0005829">
    <property type="term" value="C:cytosol"/>
    <property type="evidence" value="ECO:0000314"/>
    <property type="project" value="UniProtKB"/>
</dbReference>
<dbReference type="GO" id="GO:0005634">
    <property type="term" value="C:nucleus"/>
    <property type="evidence" value="ECO:0000314"/>
    <property type="project" value="UniProtKB"/>
</dbReference>
<dbReference type="GO" id="GO:0004842">
    <property type="term" value="F:ubiquitin-protein transferase activity"/>
    <property type="evidence" value="ECO:0000314"/>
    <property type="project" value="UniProtKB"/>
</dbReference>
<dbReference type="GO" id="GO:0007166">
    <property type="term" value="P:cell surface receptor signaling pathway"/>
    <property type="evidence" value="ECO:0007669"/>
    <property type="project" value="InterPro"/>
</dbReference>
<dbReference type="GO" id="GO:0006952">
    <property type="term" value="P:defense response"/>
    <property type="evidence" value="ECO:0007669"/>
    <property type="project" value="UniProtKB-KW"/>
</dbReference>
<dbReference type="GO" id="GO:0009908">
    <property type="term" value="P:flower development"/>
    <property type="evidence" value="ECO:0007669"/>
    <property type="project" value="UniProtKB-KW"/>
</dbReference>
<dbReference type="GO" id="GO:0031348">
    <property type="term" value="P:negative regulation of defense response"/>
    <property type="evidence" value="ECO:0000315"/>
    <property type="project" value="UniProtKB"/>
</dbReference>
<dbReference type="GO" id="GO:0043069">
    <property type="term" value="P:negative regulation of programmed cell death"/>
    <property type="evidence" value="ECO:0000315"/>
    <property type="project" value="UniProtKB"/>
</dbReference>
<dbReference type="GO" id="GO:0016567">
    <property type="term" value="P:protein ubiquitination"/>
    <property type="evidence" value="ECO:0000314"/>
    <property type="project" value="UniProtKB"/>
</dbReference>
<dbReference type="GO" id="GO:0048586">
    <property type="term" value="P:regulation of long-day photoperiodism, flowering"/>
    <property type="evidence" value="ECO:0000315"/>
    <property type="project" value="UniProtKB"/>
</dbReference>
<dbReference type="CDD" id="cd16664">
    <property type="entry name" value="RING-Ubox_PUB"/>
    <property type="match status" value="1"/>
</dbReference>
<dbReference type="FunFam" id="1.20.930.20:FF:000002">
    <property type="entry name" value="RING-type E3 ubiquitin transferase"/>
    <property type="match status" value="1"/>
</dbReference>
<dbReference type="FunFam" id="1.25.10.10:FF:000239">
    <property type="entry name" value="RING-type E3 ubiquitin transferase"/>
    <property type="match status" value="1"/>
</dbReference>
<dbReference type="FunFam" id="1.25.10.10:FF:000289">
    <property type="entry name" value="RING-type E3 ubiquitin transferase"/>
    <property type="match status" value="1"/>
</dbReference>
<dbReference type="FunFam" id="3.30.40.10:FF:000292">
    <property type="entry name" value="RING-type E3 ubiquitin transferase"/>
    <property type="match status" value="1"/>
</dbReference>
<dbReference type="Gene3D" id="1.20.930.20">
    <property type="entry name" value="Adaptor protein Cbl, N-terminal domain"/>
    <property type="match status" value="1"/>
</dbReference>
<dbReference type="Gene3D" id="1.25.10.10">
    <property type="entry name" value="Leucine-rich Repeat Variant"/>
    <property type="match status" value="2"/>
</dbReference>
<dbReference type="Gene3D" id="3.30.40.10">
    <property type="entry name" value="Zinc/RING finger domain, C3HC4 (zinc finger)"/>
    <property type="match status" value="1"/>
</dbReference>
<dbReference type="InterPro" id="IPR036537">
    <property type="entry name" value="Adaptor_Cbl_N_dom_sf"/>
</dbReference>
<dbReference type="InterPro" id="IPR011989">
    <property type="entry name" value="ARM-like"/>
</dbReference>
<dbReference type="InterPro" id="IPR016024">
    <property type="entry name" value="ARM-type_fold"/>
</dbReference>
<dbReference type="InterPro" id="IPR000225">
    <property type="entry name" value="Armadillo"/>
</dbReference>
<dbReference type="InterPro" id="IPR045210">
    <property type="entry name" value="RING-Ubox_PUB"/>
</dbReference>
<dbReference type="InterPro" id="IPR003613">
    <property type="entry name" value="Ubox_domain"/>
</dbReference>
<dbReference type="InterPro" id="IPR013083">
    <property type="entry name" value="Znf_RING/FYVE/PHD"/>
</dbReference>
<dbReference type="PANTHER" id="PTHR23315:SF236">
    <property type="entry name" value="E3 UBIQUITIN-PROTEIN LIGASE SPL11"/>
    <property type="match status" value="1"/>
</dbReference>
<dbReference type="PANTHER" id="PTHR23315">
    <property type="entry name" value="U BOX DOMAIN-CONTAINING"/>
    <property type="match status" value="1"/>
</dbReference>
<dbReference type="Pfam" id="PF00514">
    <property type="entry name" value="Arm"/>
    <property type="match status" value="3"/>
</dbReference>
<dbReference type="Pfam" id="PF25368">
    <property type="entry name" value="PUB10_N"/>
    <property type="match status" value="1"/>
</dbReference>
<dbReference type="Pfam" id="PF04564">
    <property type="entry name" value="U-box"/>
    <property type="match status" value="1"/>
</dbReference>
<dbReference type="SMART" id="SM00185">
    <property type="entry name" value="ARM"/>
    <property type="match status" value="5"/>
</dbReference>
<dbReference type="SMART" id="SM00504">
    <property type="entry name" value="Ubox"/>
    <property type="match status" value="1"/>
</dbReference>
<dbReference type="SUPFAM" id="SSF48371">
    <property type="entry name" value="ARM repeat"/>
    <property type="match status" value="1"/>
</dbReference>
<dbReference type="SUPFAM" id="SSF57850">
    <property type="entry name" value="RING/U-box"/>
    <property type="match status" value="1"/>
</dbReference>
<dbReference type="PROSITE" id="PS50176">
    <property type="entry name" value="ARM_REPEAT"/>
    <property type="match status" value="1"/>
</dbReference>
<dbReference type="PROSITE" id="PS51698">
    <property type="entry name" value="U_BOX"/>
    <property type="match status" value="1"/>
</dbReference>
<proteinExistence type="evidence at protein level"/>
<feature type="chain" id="PRO_0000072127" description="E3 ubiquitin-protein ligase SPL11">
    <location>
        <begin position="1"/>
        <end position="694"/>
    </location>
</feature>
<feature type="domain" description="U-box">
    <location>
        <begin position="272"/>
        <end position="346"/>
    </location>
</feature>
<feature type="repeat" description="ARM 1">
    <location>
        <begin position="398"/>
        <end position="438"/>
    </location>
</feature>
<feature type="repeat" description="ARM 2">
    <location>
        <begin position="439"/>
        <end position="479"/>
    </location>
</feature>
<feature type="repeat" description="ARM 3">
    <location>
        <begin position="480"/>
        <end position="520"/>
    </location>
</feature>
<feature type="repeat" description="ARM 4">
    <location>
        <begin position="521"/>
        <end position="561"/>
    </location>
</feature>
<feature type="repeat" description="ARM 5">
    <location>
        <begin position="562"/>
        <end position="602"/>
    </location>
</feature>
<feature type="repeat" description="ARM 6">
    <location>
        <begin position="603"/>
        <end position="650"/>
    </location>
</feature>
<feature type="region of interest" description="Disordered" evidence="1">
    <location>
        <begin position="1"/>
        <end position="21"/>
    </location>
</feature>
<feature type="region of interest" description="Disordered" evidence="1">
    <location>
        <begin position="343"/>
        <end position="363"/>
    </location>
</feature>
<feature type="region of interest" description="Disordered" evidence="1">
    <location>
        <begin position="650"/>
        <end position="694"/>
    </location>
</feature>
<feature type="compositionally biased region" description="Acidic residues" evidence="1">
    <location>
        <begin position="1"/>
        <end position="12"/>
    </location>
</feature>
<feature type="compositionally biased region" description="Polar residues" evidence="1">
    <location>
        <begin position="350"/>
        <end position="363"/>
    </location>
</feature>
<feature type="compositionally biased region" description="Low complexity" evidence="1">
    <location>
        <begin position="650"/>
        <end position="667"/>
    </location>
</feature>
<feature type="mutagenesis site" description="Loss of E3 ubiquitin ligase activity." evidence="2">
    <original>V</original>
    <variation>R</variation>
    <location>
        <position position="290"/>
    </location>
</feature>
<keyword id="KW-0963">Cytoplasm</keyword>
<keyword id="KW-0287">Flowering</keyword>
<keyword id="KW-0539">Nucleus</keyword>
<keyword id="KW-0611">Plant defense</keyword>
<keyword id="KW-1185">Reference proteome</keyword>
<keyword id="KW-0677">Repeat</keyword>
<keyword id="KW-0808">Transferase</keyword>
<keyword id="KW-0833">Ubl conjugation pathway</keyword>
<accession>Q0IMG9</accession>
<accession>Q2QND2</accession>
<accession>Q64HA9</accession>
<evidence type="ECO:0000256" key="1">
    <source>
        <dbReference type="SAM" id="MobiDB-lite"/>
    </source>
</evidence>
<evidence type="ECO:0000269" key="2">
    <source>
    </source>
</evidence>
<evidence type="ECO:0000269" key="3">
    <source>
    </source>
</evidence>
<evidence type="ECO:0000305" key="4"/>
<reference key="1">
    <citation type="journal article" date="2004" name="Plant Cell">
        <title>Spotted leaf11, a negative regulator of plant cell death and defense, encodes a U-Box/Armadillo repeat protein endowed with E3 Ubiquitin ligase activity.</title>
        <authorList>
            <person name="Zeng L.-R."/>
            <person name="Qu S."/>
            <person name="Bordeos A."/>
            <person name="Yang C."/>
            <person name="Baraoidan M."/>
            <person name="Yan H."/>
            <person name="Xie Q."/>
            <person name="Nahm B.H."/>
            <person name="Leung H."/>
            <person name="Wang G.-L."/>
        </authorList>
    </citation>
    <scope>NUCLEOTIDE SEQUENCE [GENOMIC DNA / MRNA]</scope>
    <scope>FUNCTION</scope>
    <scope>TISSUE SPECIFICITY</scope>
    <scope>DISRUPTION PHENOTYPE</scope>
    <scope>MUTAGENESIS OF VAL-290</scope>
    <source>
        <strain>cv. Nipponbare</strain>
    </source>
</reference>
<reference key="2">
    <citation type="journal article" date="2005" name="BMC Biol.">
        <title>The sequence of rice chromosomes 11 and 12, rich in disease resistance genes and recent gene duplications.</title>
        <authorList>
            <consortium name="The rice chromosomes 11 and 12 sequencing consortia"/>
        </authorList>
    </citation>
    <scope>NUCLEOTIDE SEQUENCE [LARGE SCALE GENOMIC DNA]</scope>
    <source>
        <strain>cv. Nipponbare</strain>
    </source>
</reference>
<reference key="3">
    <citation type="journal article" date="2005" name="Nature">
        <title>The map-based sequence of the rice genome.</title>
        <authorList>
            <consortium name="International rice genome sequencing project (IRGSP)"/>
        </authorList>
    </citation>
    <scope>NUCLEOTIDE SEQUENCE [LARGE SCALE GENOMIC DNA]</scope>
    <source>
        <strain>cv. Nipponbare</strain>
    </source>
</reference>
<reference key="4">
    <citation type="journal article" date="2008" name="Nucleic Acids Res.">
        <title>The rice annotation project database (RAP-DB): 2008 update.</title>
        <authorList>
            <consortium name="The rice annotation project (RAP)"/>
        </authorList>
    </citation>
    <scope>GENOME REANNOTATION</scope>
    <source>
        <strain>cv. Nipponbare</strain>
    </source>
</reference>
<reference key="5">
    <citation type="journal article" date="2013" name="Rice">
        <title>Improvement of the Oryza sativa Nipponbare reference genome using next generation sequence and optical map data.</title>
        <authorList>
            <person name="Kawahara Y."/>
            <person name="de la Bastide M."/>
            <person name="Hamilton J.P."/>
            <person name="Kanamori H."/>
            <person name="McCombie W.R."/>
            <person name="Ouyang S."/>
            <person name="Schwartz D.C."/>
            <person name="Tanaka T."/>
            <person name="Wu J."/>
            <person name="Zhou S."/>
            <person name="Childs K.L."/>
            <person name="Davidson R.M."/>
            <person name="Lin H."/>
            <person name="Quesada-Ocampo L."/>
            <person name="Vaillancourt B."/>
            <person name="Sakai H."/>
            <person name="Lee S.S."/>
            <person name="Kim J."/>
            <person name="Numa H."/>
            <person name="Itoh T."/>
            <person name="Buell C.R."/>
            <person name="Matsumoto T."/>
        </authorList>
    </citation>
    <scope>GENOME REANNOTATION</scope>
    <source>
        <strain>cv. Nipponbare</strain>
    </source>
</reference>
<reference key="6">
    <citation type="journal article" date="2003" name="Science">
        <title>Collection, mapping, and annotation of over 28,000 cDNA clones from japonica rice.</title>
        <authorList>
            <consortium name="The rice full-length cDNA consortium"/>
        </authorList>
    </citation>
    <scope>NUCLEOTIDE SEQUENCE [LARGE SCALE MRNA] OF 178-694</scope>
    <source>
        <strain>cv. Nipponbare</strain>
    </source>
</reference>
<reference key="7">
    <citation type="journal article" date="2008" name="Plant Cell">
        <title>SPIN1, a K homology domain protein negatively regulated and ubiquitinated by the E3 ubiquitin ligase SPL11, is involved in flowering time control in rice.</title>
        <authorList>
            <person name="Vega-Sanchez M.E."/>
            <person name="Zeng L."/>
            <person name="Chen S."/>
            <person name="Leung H."/>
            <person name="Wang G.L."/>
        </authorList>
    </citation>
    <scope>FUNCTION</scope>
    <scope>INTERACTION WITH SPIN1</scope>
    <scope>SUBCELLULAR LOCATION</scope>
</reference>
<sequence>MAGDRAEEEEGEAPPPEARAAAAVERVAAAVEAVAAGAGAGAGEYRNAYRRQLLALSRRIRLLGPFVEELRERRRGEGEGEEEERALAPLADALEAALALLRLGREGSRISLVLERDSVMKKFQGVILQLEQALCDIPYNELDISDEVREQVELVHAQLKRAKERIDMPDDEFYNDLLSVYDKNYDPSAELAILGRLSEKLHLMTITDLTQESLALHEMVASGGGQDPGEHIERMSMLLKKIKDFVQTQNPDMGPPMASRVLDSNGDSRPITIPDEFRCPISLELMKDPVIVSTGQTYERACIEKWIASGHHTCPTTQQKMSTSALTPNYVLRSLISQWCETNGMEPPKRSTQPNKPTPACSSSERANIDALLSKLCSPDTEEQRSAAAELRLLAKRNANNRICIAEAGAIPLLLSLLSSSDLRTQEHAVTALLNLSIHEDNKASIISSGAVPSIVHVLKNGSMEARENAAATLFSLSVIDEYKVTIGGMGAIPALVVLLGEGSQRGKKDAAAALFNLCIYQGNKGRAIRAGLVPLIMGLVTNPTGALMDEAMAILSILSSHPEGKAAIGAAEPVPVLVEMIGSGTPRNRENAAAVMLHLCSGEHHLVHLARAQECGIMVPLRELALNGTDRGKRKAVQLLERMSRFLVQQQEEQESQSQASAQVPPQATPEQVPENDIPEQLDSPASQYPMVV</sequence>
<name>SL11_ORYSJ</name>
<protein>
    <recommendedName>
        <fullName>E3 ubiquitin-protein ligase SPL11</fullName>
        <ecNumber>2.3.2.27</ecNumber>
    </recommendedName>
    <alternativeName>
        <fullName>Cell death-related protein SPL11</fullName>
    </alternativeName>
    <alternativeName>
        <fullName>Protein spotted leaf 11</fullName>
    </alternativeName>
    <alternativeName>
        <fullName evidence="4">RING-type E3 ubiquitin transferase SPL11</fullName>
    </alternativeName>
</protein>